<accession>B7L7D0</accession>
<comment type="function">
    <text evidence="1">Involved in the post-transcriptional modification of the uridine at the wobble position (U34) of tRNA(Lys), tRNA(Glu) and tRNA(Gln). Catalyzes the conversion of 2-thiouridine (S2U-RNA) to 2-selenouridine (Se2U-RNA). Acts in a two-step process involving geranylation of 2-thiouridine (S2U) to S-geranyl-2-thiouridine (geS2U) and subsequent selenation of the latter derivative to 2-selenouridine (Se2U) in the tRNA chain.</text>
</comment>
<comment type="catalytic activity">
    <reaction evidence="1">
        <text>5-methylaminomethyl-2-thiouridine(34) in tRNA + selenophosphate + (2E)-geranyl diphosphate + H2O + H(+) = 5-methylaminomethyl-2-selenouridine(34) in tRNA + (2E)-thiogeraniol + phosphate + diphosphate</text>
        <dbReference type="Rhea" id="RHEA:42716"/>
        <dbReference type="Rhea" id="RHEA-COMP:10195"/>
        <dbReference type="Rhea" id="RHEA-COMP:10196"/>
        <dbReference type="ChEBI" id="CHEBI:15377"/>
        <dbReference type="ChEBI" id="CHEBI:15378"/>
        <dbReference type="ChEBI" id="CHEBI:16144"/>
        <dbReference type="ChEBI" id="CHEBI:33019"/>
        <dbReference type="ChEBI" id="CHEBI:43474"/>
        <dbReference type="ChEBI" id="CHEBI:58057"/>
        <dbReference type="ChEBI" id="CHEBI:74455"/>
        <dbReference type="ChEBI" id="CHEBI:82743"/>
        <dbReference type="ChEBI" id="CHEBI:143703"/>
        <dbReference type="EC" id="2.9.1.3"/>
    </reaction>
    <physiologicalReaction direction="left-to-right" evidence="1">
        <dbReference type="Rhea" id="RHEA:42717"/>
    </physiologicalReaction>
</comment>
<comment type="catalytic activity">
    <reaction evidence="1">
        <text>5-methylaminomethyl-2-thiouridine(34) in tRNA + (2E)-geranyl diphosphate = 5-methylaminomethyl-S-(2E)-geranyl-thiouridine(34) in tRNA + diphosphate</text>
        <dbReference type="Rhea" id="RHEA:14085"/>
        <dbReference type="Rhea" id="RHEA-COMP:10195"/>
        <dbReference type="Rhea" id="RHEA-COMP:14654"/>
        <dbReference type="ChEBI" id="CHEBI:33019"/>
        <dbReference type="ChEBI" id="CHEBI:58057"/>
        <dbReference type="ChEBI" id="CHEBI:74455"/>
        <dbReference type="ChEBI" id="CHEBI:140632"/>
    </reaction>
    <physiologicalReaction direction="left-to-right" evidence="1">
        <dbReference type="Rhea" id="RHEA:14086"/>
    </physiologicalReaction>
</comment>
<comment type="catalytic activity">
    <reaction evidence="1">
        <text>5-methylaminomethyl-S-(2E)-geranyl-thiouridine(34) in tRNA + selenophosphate + H(+) = 5-methylaminomethyl-2-(Se-phospho)selenouridine(34) in tRNA + (2E)-thiogeraniol</text>
        <dbReference type="Rhea" id="RHEA:60172"/>
        <dbReference type="Rhea" id="RHEA-COMP:14654"/>
        <dbReference type="Rhea" id="RHEA-COMP:15523"/>
        <dbReference type="ChEBI" id="CHEBI:15378"/>
        <dbReference type="ChEBI" id="CHEBI:16144"/>
        <dbReference type="ChEBI" id="CHEBI:140632"/>
        <dbReference type="ChEBI" id="CHEBI:143702"/>
        <dbReference type="ChEBI" id="CHEBI:143703"/>
    </reaction>
    <physiologicalReaction direction="left-to-right" evidence="1">
        <dbReference type="Rhea" id="RHEA:60173"/>
    </physiologicalReaction>
</comment>
<comment type="catalytic activity">
    <reaction evidence="1">
        <text>5-methylaminomethyl-2-(Se-phospho)selenouridine(34) in tRNA + H2O = 5-methylaminomethyl-2-selenouridine(34) in tRNA + phosphate</text>
        <dbReference type="Rhea" id="RHEA:60176"/>
        <dbReference type="Rhea" id="RHEA-COMP:10196"/>
        <dbReference type="Rhea" id="RHEA-COMP:15523"/>
        <dbReference type="ChEBI" id="CHEBI:15377"/>
        <dbReference type="ChEBI" id="CHEBI:43474"/>
        <dbReference type="ChEBI" id="CHEBI:82743"/>
        <dbReference type="ChEBI" id="CHEBI:143702"/>
    </reaction>
    <physiologicalReaction direction="left-to-right" evidence="1">
        <dbReference type="Rhea" id="RHEA:60177"/>
    </physiologicalReaction>
</comment>
<comment type="subunit">
    <text evidence="1">Monomer.</text>
</comment>
<comment type="similarity">
    <text evidence="1">Belongs to the SelU family.</text>
</comment>
<feature type="chain" id="PRO_1000186067" description="tRNA 2-selenouridine synthase">
    <location>
        <begin position="1"/>
        <end position="364"/>
    </location>
</feature>
<feature type="domain" description="Rhodanese" evidence="1">
    <location>
        <begin position="14"/>
        <end position="137"/>
    </location>
</feature>
<feature type="active site" description="S-selanylcysteine intermediate" evidence="1">
    <location>
        <position position="97"/>
    </location>
</feature>
<dbReference type="EC" id="2.9.1.3" evidence="1"/>
<dbReference type="EMBL" id="CU928145">
    <property type="protein sequence ID" value="CAU96391.1"/>
    <property type="molecule type" value="Genomic_DNA"/>
</dbReference>
<dbReference type="RefSeq" id="WP_001157993.1">
    <property type="nucleotide sequence ID" value="NC_011748.1"/>
</dbReference>
<dbReference type="SMR" id="B7L7D0"/>
<dbReference type="KEGG" id="eck:EC55989_0518"/>
<dbReference type="HOGENOM" id="CLU_043456_1_0_6"/>
<dbReference type="Proteomes" id="UP000000746">
    <property type="component" value="Chromosome"/>
</dbReference>
<dbReference type="GO" id="GO:0016765">
    <property type="term" value="F:transferase activity, transferring alkyl or aryl (other than methyl) groups"/>
    <property type="evidence" value="ECO:0007669"/>
    <property type="project" value="UniProtKB-UniRule"/>
</dbReference>
<dbReference type="GO" id="GO:0043828">
    <property type="term" value="F:tRNA 2-selenouridine synthase activity"/>
    <property type="evidence" value="ECO:0007669"/>
    <property type="project" value="UniProtKB-EC"/>
</dbReference>
<dbReference type="GO" id="GO:0002098">
    <property type="term" value="P:tRNA wobble uridine modification"/>
    <property type="evidence" value="ECO:0007669"/>
    <property type="project" value="UniProtKB-UniRule"/>
</dbReference>
<dbReference type="CDD" id="cd01520">
    <property type="entry name" value="RHOD_YbbB"/>
    <property type="match status" value="1"/>
</dbReference>
<dbReference type="FunFam" id="3.40.250.10:FF:000009">
    <property type="entry name" value="tRNA 2-selenouridine/geranyl-2-thiouridine synthase"/>
    <property type="match status" value="1"/>
</dbReference>
<dbReference type="Gene3D" id="3.40.250.10">
    <property type="entry name" value="Rhodanese-like domain"/>
    <property type="match status" value="1"/>
</dbReference>
<dbReference type="HAMAP" id="MF_01622">
    <property type="entry name" value="tRNA_sel_U_synth"/>
    <property type="match status" value="1"/>
</dbReference>
<dbReference type="InterPro" id="IPR001763">
    <property type="entry name" value="Rhodanese-like_dom"/>
</dbReference>
<dbReference type="InterPro" id="IPR036873">
    <property type="entry name" value="Rhodanese-like_dom_sf"/>
</dbReference>
<dbReference type="InterPro" id="IPR017582">
    <property type="entry name" value="SelU"/>
</dbReference>
<dbReference type="NCBIfam" id="NF008749">
    <property type="entry name" value="PRK11784.1-1"/>
    <property type="match status" value="1"/>
</dbReference>
<dbReference type="NCBIfam" id="NF008751">
    <property type="entry name" value="PRK11784.1-3"/>
    <property type="match status" value="1"/>
</dbReference>
<dbReference type="NCBIfam" id="TIGR03167">
    <property type="entry name" value="tRNA_sel_U_synt"/>
    <property type="match status" value="1"/>
</dbReference>
<dbReference type="PANTHER" id="PTHR30401">
    <property type="entry name" value="TRNA 2-SELENOURIDINE SYNTHASE"/>
    <property type="match status" value="1"/>
</dbReference>
<dbReference type="PANTHER" id="PTHR30401:SF0">
    <property type="entry name" value="TRNA 2-SELENOURIDINE SYNTHASE"/>
    <property type="match status" value="1"/>
</dbReference>
<dbReference type="Pfam" id="PF00581">
    <property type="entry name" value="Rhodanese"/>
    <property type="match status" value="1"/>
</dbReference>
<dbReference type="SMART" id="SM00450">
    <property type="entry name" value="RHOD"/>
    <property type="match status" value="1"/>
</dbReference>
<dbReference type="SUPFAM" id="SSF52821">
    <property type="entry name" value="Rhodanese/Cell cycle control phosphatase"/>
    <property type="match status" value="1"/>
</dbReference>
<dbReference type="PROSITE" id="PS50206">
    <property type="entry name" value="RHODANESE_3"/>
    <property type="match status" value="1"/>
</dbReference>
<keyword id="KW-1185">Reference proteome</keyword>
<keyword id="KW-0711">Selenium</keyword>
<keyword id="KW-0808">Transferase</keyword>
<organism>
    <name type="scientific">Escherichia coli (strain 55989 / EAEC)</name>
    <dbReference type="NCBI Taxonomy" id="585055"/>
    <lineage>
        <taxon>Bacteria</taxon>
        <taxon>Pseudomonadati</taxon>
        <taxon>Pseudomonadota</taxon>
        <taxon>Gammaproteobacteria</taxon>
        <taxon>Enterobacterales</taxon>
        <taxon>Enterobacteriaceae</taxon>
        <taxon>Escherichia</taxon>
    </lineage>
</organism>
<evidence type="ECO:0000255" key="1">
    <source>
        <dbReference type="HAMAP-Rule" id="MF_01622"/>
    </source>
</evidence>
<proteinExistence type="inferred from homology"/>
<sequence>MQERHTEQDYRALLIADTPIIDVRAPIEFEQGAMPAAINLPLMNNDERAAVGTCYKQQGSDAALALGHKLVAGEIRQQRMDAWRAACLQNPQGILCCARGGQRSHIVQSWLHAAGIDYPLVEGGYKALRQTTIQATIELAQKPIVLIGGCTGCGKTLLVQQQPNGVDLEGLARHRGSAFGRTLQPQLSQASFENLLAAEMLKTDARQNLRLWVLEDESRMIGSNHLPECLRERMTQAAIAVVEDPFEIRLERLNEEYFLRMHHDFTHAYGDEQGWQEYCEYLHHGLSAIKRRLGLQRYNELAARLDAALTTQLATGSTDSHLAWLVPLLKEYYDPMYRYQLEKKAEKVVFRGEWAEVAEWVKAR</sequence>
<reference key="1">
    <citation type="journal article" date="2009" name="PLoS Genet.">
        <title>Organised genome dynamics in the Escherichia coli species results in highly diverse adaptive paths.</title>
        <authorList>
            <person name="Touchon M."/>
            <person name="Hoede C."/>
            <person name="Tenaillon O."/>
            <person name="Barbe V."/>
            <person name="Baeriswyl S."/>
            <person name="Bidet P."/>
            <person name="Bingen E."/>
            <person name="Bonacorsi S."/>
            <person name="Bouchier C."/>
            <person name="Bouvet O."/>
            <person name="Calteau A."/>
            <person name="Chiapello H."/>
            <person name="Clermont O."/>
            <person name="Cruveiller S."/>
            <person name="Danchin A."/>
            <person name="Diard M."/>
            <person name="Dossat C."/>
            <person name="Karoui M.E."/>
            <person name="Frapy E."/>
            <person name="Garry L."/>
            <person name="Ghigo J.M."/>
            <person name="Gilles A.M."/>
            <person name="Johnson J."/>
            <person name="Le Bouguenec C."/>
            <person name="Lescat M."/>
            <person name="Mangenot S."/>
            <person name="Martinez-Jehanne V."/>
            <person name="Matic I."/>
            <person name="Nassif X."/>
            <person name="Oztas S."/>
            <person name="Petit M.A."/>
            <person name="Pichon C."/>
            <person name="Rouy Z."/>
            <person name="Ruf C.S."/>
            <person name="Schneider D."/>
            <person name="Tourret J."/>
            <person name="Vacherie B."/>
            <person name="Vallenet D."/>
            <person name="Medigue C."/>
            <person name="Rocha E.P.C."/>
            <person name="Denamur E."/>
        </authorList>
    </citation>
    <scope>NUCLEOTIDE SEQUENCE [LARGE SCALE GENOMIC DNA]</scope>
    <source>
        <strain>55989 / EAEC</strain>
    </source>
</reference>
<gene>
    <name evidence="1" type="primary">selU</name>
    <name type="ordered locus">EC55989_0518</name>
</gene>
<name>SELU_ECO55</name>
<protein>
    <recommendedName>
        <fullName evidence="1">tRNA 2-selenouridine synthase</fullName>
        <ecNumber evidence="1">2.9.1.3</ecNumber>
    </recommendedName>
</protein>